<keyword id="KW-0963">Cytoplasm</keyword>
<keyword id="KW-0217">Developmental protein</keyword>
<keyword id="KW-0221">Differentiation</keyword>
<keyword id="KW-0896">Oogenesis</keyword>
<keyword id="KW-1185">Reference proteome</keyword>
<keyword id="KW-0687">Ribonucleoprotein</keyword>
<keyword id="KW-0689">Ribosomal protein</keyword>
<evidence type="ECO:0000255" key="1">
    <source>
        <dbReference type="HAMAP-Rule" id="MF_03122"/>
    </source>
</evidence>
<evidence type="ECO:0000256" key="2">
    <source>
        <dbReference type="SAM" id="MobiDB-lite"/>
    </source>
</evidence>
<evidence type="ECO:0000305" key="3"/>
<evidence type="ECO:0000312" key="4">
    <source>
        <dbReference type="Proteomes" id="UP000008792"/>
    </source>
</evidence>
<reference key="1">
    <citation type="journal article" date="2010" name="Genetics">
        <title>Evolution of a distinct genomic domain in Drosophila: comparative analysis of the dot chromosome in Drosophila melanogaster and Drosophila virilis.</title>
        <authorList>
            <person name="Leung W."/>
            <person name="Shaffer C.D."/>
            <person name="Cordonnier T."/>
            <person name="Wong J."/>
            <person name="Itano M.S."/>
            <person name="Slawson Tempel E.E."/>
            <person name="Kellmann E."/>
            <person name="Desruisseau D.M."/>
            <person name="Cain C."/>
            <person name="Carrasquillo R."/>
            <person name="Chusak T.M."/>
            <person name="Falkowska K."/>
            <person name="Grim K.D."/>
            <person name="Guan R."/>
            <person name="Honeybourne J."/>
            <person name="Khan S."/>
            <person name="Lo L."/>
            <person name="McGaha R."/>
            <person name="Plunkett J."/>
            <person name="Richner J.M."/>
            <person name="Richt R."/>
            <person name="Sabin L."/>
            <person name="Shah A."/>
            <person name="Sharma A."/>
            <person name="Singhal S."/>
            <person name="Song F."/>
            <person name="Swope C."/>
            <person name="Wilen C.B."/>
            <person name="Buhler J."/>
            <person name="Mardis E.R."/>
            <person name="Elgin S.C."/>
        </authorList>
    </citation>
    <scope>NUCLEOTIDE SEQUENCE [GENOMIC DNA]</scope>
    <source>
        <strain evidence="4">Tucson 15010-1051.87</strain>
    </source>
</reference>
<reference key="2">
    <citation type="journal article" date="2007" name="Nature">
        <title>Evolution of genes and genomes on the Drosophila phylogeny.</title>
        <authorList>
            <consortium name="Drosophila 12 genomes consortium"/>
        </authorList>
    </citation>
    <scope>NUCLEOTIDE SEQUENCE [LARGE SCALE GENOMIC DNA]</scope>
    <source>
        <strain>Tucson 15010-1051.88</strain>
    </source>
</reference>
<proteinExistence type="inferred from homology"/>
<name>RS3A_DROVI</name>
<feature type="initiator methionine" description="Removed" evidence="1">
    <location>
        <position position="1"/>
    </location>
</feature>
<feature type="chain" id="PRO_0000389313" description="Small ribosomal subunit protein eS1">
    <location>
        <begin position="2"/>
        <end position="268"/>
    </location>
</feature>
<feature type="region of interest" description="Disordered" evidence="2">
    <location>
        <begin position="1"/>
        <end position="21"/>
    </location>
</feature>
<comment type="function">
    <text evidence="1">Essential for oogenesis; required for late follicle cell development.</text>
</comment>
<comment type="subunit">
    <text evidence="1">Component of the small ribosomal subunit. Mature ribosomes consist of a small (40S) and a large (60S) subunit. The 40S subunit contains about 33 different proteins and 1 molecule of RNA (18S). The 60S subunit contains about 49 different proteins and 3 molecules of RNA (28S, 5.8S and 5S).</text>
</comment>
<comment type="subcellular location">
    <subcellularLocation>
        <location evidence="1">Cytoplasm</location>
    </subcellularLocation>
</comment>
<comment type="similarity">
    <text evidence="1">Belongs to the eukaryotic ribosomal protein eS1 family.</text>
</comment>
<sequence>MAVGKNKGLSKGGKKGGKKKVVDPFSRKDWYDVKAPNMFQTRQIGKTLVNRTQGQRIASDYLKGRVFEVSLADLQKDIDPERSFRKFRLIAEDVQDRNVLCNFHGMDLTTDKYRSMVKKWQTLIEAIVEAKTVDGYLLRVFCIGFTSKDQQSQRKTCYAQQSQVRKIRARMTDIITNEVSGADLKQLVNKLALDSIAKDIEKSCQRIYPLHDVYIRKVKVLKKPRFDVSKLLELHGDGGGKTTEAVVSAEGAVIDRPEGYEPPVQEAV</sequence>
<protein>
    <recommendedName>
        <fullName evidence="1">Small ribosomal subunit protein eS1</fullName>
    </recommendedName>
    <alternativeName>
        <fullName evidence="3">40S ribosomal protein S3a</fullName>
    </alternativeName>
</protein>
<gene>
    <name evidence="1" type="primary">RpS3A</name>
    <name type="synonym">88_6g0080</name>
    <name type="ORF">GJ21872</name>
</gene>
<organism>
    <name type="scientific">Drosophila virilis</name>
    <name type="common">Fruit fly</name>
    <dbReference type="NCBI Taxonomy" id="7244"/>
    <lineage>
        <taxon>Eukaryota</taxon>
        <taxon>Metazoa</taxon>
        <taxon>Ecdysozoa</taxon>
        <taxon>Arthropoda</taxon>
        <taxon>Hexapoda</taxon>
        <taxon>Insecta</taxon>
        <taxon>Pterygota</taxon>
        <taxon>Neoptera</taxon>
        <taxon>Endopterygota</taxon>
        <taxon>Diptera</taxon>
        <taxon>Brachycera</taxon>
        <taxon>Muscomorpha</taxon>
        <taxon>Ephydroidea</taxon>
        <taxon>Drosophilidae</taxon>
        <taxon>Drosophila</taxon>
    </lineage>
</organism>
<accession>B4MEW8</accession>
<accession>D0Z776</accession>
<dbReference type="EMBL" id="CM000831">
    <property type="protein sequence ID" value="ACY70543.1"/>
    <property type="molecule type" value="Genomic_DNA"/>
</dbReference>
<dbReference type="EMBL" id="CH940665">
    <property type="protein sequence ID" value="EDW71069.1"/>
    <property type="molecule type" value="Genomic_DNA"/>
</dbReference>
<dbReference type="RefSeq" id="XP_002059671.1">
    <property type="nucleotide sequence ID" value="XM_002059635.4"/>
</dbReference>
<dbReference type="SMR" id="B4MEW8"/>
<dbReference type="FunCoup" id="B4MEW8">
    <property type="interactions" value="906"/>
</dbReference>
<dbReference type="STRING" id="7244.B4MEW8"/>
<dbReference type="EnsemblMetazoa" id="FBtr0237797">
    <property type="protein sequence ID" value="FBpp0236289"/>
    <property type="gene ID" value="FBgn0208989"/>
</dbReference>
<dbReference type="EnsemblMetazoa" id="XM_002059635.3">
    <property type="protein sequence ID" value="XP_002059671.1"/>
    <property type="gene ID" value="LOC6636181"/>
</dbReference>
<dbReference type="GeneID" id="6636181"/>
<dbReference type="KEGG" id="dvi:6636181"/>
<dbReference type="CTD" id="6189"/>
<dbReference type="eggNOG" id="KOG1628">
    <property type="taxonomic scope" value="Eukaryota"/>
</dbReference>
<dbReference type="HOGENOM" id="CLU_062507_0_1_1"/>
<dbReference type="InParanoid" id="B4MEW8"/>
<dbReference type="OMA" id="MCEIITR"/>
<dbReference type="OrthoDB" id="9834376at2759"/>
<dbReference type="PhylomeDB" id="B4MEW8"/>
<dbReference type="ChiTaRS" id="RpS3A">
    <property type="organism name" value="fly"/>
</dbReference>
<dbReference type="Proteomes" id="UP000008792">
    <property type="component" value="Chromosome 6"/>
</dbReference>
<dbReference type="Proteomes" id="UP000008792">
    <property type="component" value="Unassembled WGS sequence"/>
</dbReference>
<dbReference type="GO" id="GO:0022627">
    <property type="term" value="C:cytosolic small ribosomal subunit"/>
    <property type="evidence" value="ECO:0007669"/>
    <property type="project" value="UniProtKB-UniRule"/>
</dbReference>
<dbReference type="GO" id="GO:0003735">
    <property type="term" value="F:structural constituent of ribosome"/>
    <property type="evidence" value="ECO:0007669"/>
    <property type="project" value="UniProtKB-UniRule"/>
</dbReference>
<dbReference type="GO" id="GO:0048477">
    <property type="term" value="P:oogenesis"/>
    <property type="evidence" value="ECO:0007669"/>
    <property type="project" value="UniProtKB-KW"/>
</dbReference>
<dbReference type="GO" id="GO:0006412">
    <property type="term" value="P:translation"/>
    <property type="evidence" value="ECO:0007669"/>
    <property type="project" value="UniProtKB-UniRule"/>
</dbReference>
<dbReference type="HAMAP" id="MF_03122">
    <property type="entry name" value="Ribosomal_eS1_euk"/>
    <property type="match status" value="1"/>
</dbReference>
<dbReference type="InterPro" id="IPR001593">
    <property type="entry name" value="Ribosomal_eS1"/>
</dbReference>
<dbReference type="InterPro" id="IPR018281">
    <property type="entry name" value="Ribosomal_eS1_CS"/>
</dbReference>
<dbReference type="InterPro" id="IPR027500">
    <property type="entry name" value="Ribosomal_eS1_euk"/>
</dbReference>
<dbReference type="PANTHER" id="PTHR11830">
    <property type="entry name" value="40S RIBOSOMAL PROTEIN S3A"/>
    <property type="match status" value="1"/>
</dbReference>
<dbReference type="Pfam" id="PF01015">
    <property type="entry name" value="Ribosomal_S3Ae"/>
    <property type="match status" value="1"/>
</dbReference>
<dbReference type="SMART" id="SM01397">
    <property type="entry name" value="Ribosomal_S3Ae"/>
    <property type="match status" value="1"/>
</dbReference>
<dbReference type="PROSITE" id="PS01191">
    <property type="entry name" value="RIBOSOMAL_S3AE"/>
    <property type="match status" value="1"/>
</dbReference>